<protein>
    <recommendedName>
        <fullName>Inner membrane ABC transporter permease protein YcjO</fullName>
    </recommendedName>
</protein>
<organism>
    <name type="scientific">Shigella flexneri</name>
    <dbReference type="NCBI Taxonomy" id="623"/>
    <lineage>
        <taxon>Bacteria</taxon>
        <taxon>Pseudomonadati</taxon>
        <taxon>Pseudomonadota</taxon>
        <taxon>Gammaproteobacteria</taxon>
        <taxon>Enterobacterales</taxon>
        <taxon>Enterobacteriaceae</taxon>
        <taxon>Shigella</taxon>
    </lineage>
</organism>
<dbReference type="EMBL" id="AE005674">
    <property type="protein sequence ID" value="AAN42926.1"/>
    <property type="molecule type" value="Genomic_DNA"/>
</dbReference>
<dbReference type="EMBL" id="AE014073">
    <property type="protein sequence ID" value="AAP16809.1"/>
    <property type="molecule type" value="Genomic_DNA"/>
</dbReference>
<dbReference type="RefSeq" id="NP_707219.1">
    <property type="nucleotide sequence ID" value="NC_004337.2"/>
</dbReference>
<dbReference type="RefSeq" id="WP_001080790.1">
    <property type="nucleotide sequence ID" value="NZ_WPGW01000064.1"/>
</dbReference>
<dbReference type="SMR" id="P0AFR8"/>
<dbReference type="STRING" id="198214.SF1317"/>
<dbReference type="PaxDb" id="198214-SF1317"/>
<dbReference type="GeneID" id="1024280"/>
<dbReference type="KEGG" id="sfl:SF1317"/>
<dbReference type="KEGG" id="sfx:S1400"/>
<dbReference type="PATRIC" id="fig|198214.7.peg.1547"/>
<dbReference type="HOGENOM" id="CLU_016047_0_3_6"/>
<dbReference type="Proteomes" id="UP000001006">
    <property type="component" value="Chromosome"/>
</dbReference>
<dbReference type="Proteomes" id="UP000002673">
    <property type="component" value="Chromosome"/>
</dbReference>
<dbReference type="GO" id="GO:0005886">
    <property type="term" value="C:plasma membrane"/>
    <property type="evidence" value="ECO:0007669"/>
    <property type="project" value="UniProtKB-SubCell"/>
</dbReference>
<dbReference type="GO" id="GO:0055085">
    <property type="term" value="P:transmembrane transport"/>
    <property type="evidence" value="ECO:0007669"/>
    <property type="project" value="InterPro"/>
</dbReference>
<dbReference type="CDD" id="cd06261">
    <property type="entry name" value="TM_PBP2"/>
    <property type="match status" value="1"/>
</dbReference>
<dbReference type="FunFam" id="1.10.3720.10:FF:000041">
    <property type="entry name" value="Inner membrane ABC transporter permease ycjO"/>
    <property type="match status" value="1"/>
</dbReference>
<dbReference type="Gene3D" id="1.10.3720.10">
    <property type="entry name" value="MetI-like"/>
    <property type="match status" value="1"/>
</dbReference>
<dbReference type="InterPro" id="IPR000515">
    <property type="entry name" value="MetI-like"/>
</dbReference>
<dbReference type="InterPro" id="IPR035906">
    <property type="entry name" value="MetI-like_sf"/>
</dbReference>
<dbReference type="InterPro" id="IPR050809">
    <property type="entry name" value="UgpAE/MalFG_permease"/>
</dbReference>
<dbReference type="PANTHER" id="PTHR43227:SF7">
    <property type="entry name" value="ARABINOOLIGOSACCHARIDES TRANSPORT SYSTEM PERMEASE PROTEIN ARAP"/>
    <property type="match status" value="1"/>
</dbReference>
<dbReference type="PANTHER" id="PTHR43227">
    <property type="entry name" value="BLL4140 PROTEIN"/>
    <property type="match status" value="1"/>
</dbReference>
<dbReference type="Pfam" id="PF00528">
    <property type="entry name" value="BPD_transp_1"/>
    <property type="match status" value="1"/>
</dbReference>
<dbReference type="SUPFAM" id="SSF161098">
    <property type="entry name" value="MetI-like"/>
    <property type="match status" value="1"/>
</dbReference>
<dbReference type="PROSITE" id="PS50928">
    <property type="entry name" value="ABC_TM1"/>
    <property type="match status" value="1"/>
</dbReference>
<gene>
    <name type="primary">ycjO</name>
    <name type="ordered locus">SF1317</name>
    <name type="ordered locus">S1400</name>
</gene>
<comment type="function">
    <text evidence="1">Probably part of the binding-protein-dependent transport system YcjNOP. Probably responsible for the translocation of the substrate across the membrane (By similarity).</text>
</comment>
<comment type="subcellular location">
    <subcellularLocation>
        <location evidence="1">Cell inner membrane</location>
        <topology evidence="3">Multi-pass membrane protein</topology>
    </subcellularLocation>
</comment>
<comment type="similarity">
    <text evidence="4">Belongs to the binding-protein-dependent transport system permease family. MalFG subfamily.</text>
</comment>
<accession>P0AFR8</accession>
<accession>P76840</accession>
<accession>P77653</accession>
<keyword id="KW-0997">Cell inner membrane</keyword>
<keyword id="KW-1003">Cell membrane</keyword>
<keyword id="KW-0472">Membrane</keyword>
<keyword id="KW-1185">Reference proteome</keyword>
<keyword id="KW-0812">Transmembrane</keyword>
<keyword id="KW-1133">Transmembrane helix</keyword>
<keyword id="KW-0813">Transport</keyword>
<name>YCJO_SHIFL</name>
<evidence type="ECO:0000250" key="1"/>
<evidence type="ECO:0000255" key="2"/>
<evidence type="ECO:0000255" key="3">
    <source>
        <dbReference type="PROSITE-ProRule" id="PRU00441"/>
    </source>
</evidence>
<evidence type="ECO:0000305" key="4"/>
<feature type="chain" id="PRO_0000060240" description="Inner membrane ABC transporter permease protein YcjO">
    <location>
        <begin position="1"/>
        <end position="293"/>
    </location>
</feature>
<feature type="topological domain" description="Periplasmic" evidence="2">
    <location>
        <begin position="1"/>
        <end position="12"/>
    </location>
</feature>
<feature type="transmembrane region" description="Helical" evidence="3">
    <location>
        <begin position="13"/>
        <end position="33"/>
    </location>
</feature>
<feature type="topological domain" description="Cytoplasmic" evidence="2">
    <location>
        <begin position="34"/>
        <end position="77"/>
    </location>
</feature>
<feature type="transmembrane region" description="Helical" evidence="3">
    <location>
        <begin position="78"/>
        <end position="98"/>
    </location>
</feature>
<feature type="topological domain" description="Periplasmic" evidence="2">
    <location>
        <begin position="99"/>
        <end position="110"/>
    </location>
</feature>
<feature type="transmembrane region" description="Helical" evidence="3">
    <location>
        <begin position="111"/>
        <end position="131"/>
    </location>
</feature>
<feature type="topological domain" description="Cytoplasmic" evidence="2">
    <location>
        <begin position="132"/>
        <end position="135"/>
    </location>
</feature>
<feature type="transmembrane region" description="Helical" evidence="3">
    <location>
        <begin position="136"/>
        <end position="156"/>
    </location>
</feature>
<feature type="topological domain" description="Periplasmic" evidence="2">
    <location>
        <begin position="157"/>
        <end position="162"/>
    </location>
</feature>
<feature type="transmembrane region" description="Helical" evidence="3">
    <location>
        <begin position="163"/>
        <end position="183"/>
    </location>
</feature>
<feature type="topological domain" description="Cytoplasmic" evidence="2">
    <location>
        <begin position="184"/>
        <end position="214"/>
    </location>
</feature>
<feature type="transmembrane region" description="Helical" evidence="3">
    <location>
        <begin position="215"/>
        <end position="235"/>
    </location>
</feature>
<feature type="topological domain" description="Periplasmic" evidence="2">
    <location>
        <begin position="236"/>
        <end position="261"/>
    </location>
</feature>
<feature type="transmembrane region" description="Helical" evidence="3">
    <location>
        <begin position="262"/>
        <end position="282"/>
    </location>
</feature>
<feature type="topological domain" description="Cytoplasmic" evidence="2">
    <location>
        <begin position="283"/>
        <end position="293"/>
    </location>
</feature>
<feature type="domain" description="ABC transmembrane type-1" evidence="3">
    <location>
        <begin position="73"/>
        <end position="283"/>
    </location>
</feature>
<proteinExistence type="inferred from homology"/>
<reference key="1">
    <citation type="journal article" date="2002" name="Nucleic Acids Res.">
        <title>Genome sequence of Shigella flexneri 2a: insights into pathogenicity through comparison with genomes of Escherichia coli K12 and O157.</title>
        <authorList>
            <person name="Jin Q."/>
            <person name="Yuan Z."/>
            <person name="Xu J."/>
            <person name="Wang Y."/>
            <person name="Shen Y."/>
            <person name="Lu W."/>
            <person name="Wang J."/>
            <person name="Liu H."/>
            <person name="Yang J."/>
            <person name="Yang F."/>
            <person name="Zhang X."/>
            <person name="Zhang J."/>
            <person name="Yang G."/>
            <person name="Wu H."/>
            <person name="Qu D."/>
            <person name="Dong J."/>
            <person name="Sun L."/>
            <person name="Xue Y."/>
            <person name="Zhao A."/>
            <person name="Gao Y."/>
            <person name="Zhu J."/>
            <person name="Kan B."/>
            <person name="Ding K."/>
            <person name="Chen S."/>
            <person name="Cheng H."/>
            <person name="Yao Z."/>
            <person name="He B."/>
            <person name="Chen R."/>
            <person name="Ma D."/>
            <person name="Qiang B."/>
            <person name="Wen Y."/>
            <person name="Hou Y."/>
            <person name="Yu J."/>
        </authorList>
    </citation>
    <scope>NUCLEOTIDE SEQUENCE [LARGE SCALE GENOMIC DNA]</scope>
    <source>
        <strain>301 / Serotype 2a</strain>
    </source>
</reference>
<reference key="2">
    <citation type="journal article" date="2003" name="Infect. Immun.">
        <title>Complete genome sequence and comparative genomics of Shigella flexneri serotype 2a strain 2457T.</title>
        <authorList>
            <person name="Wei J."/>
            <person name="Goldberg M.B."/>
            <person name="Burland V."/>
            <person name="Venkatesan M.M."/>
            <person name="Deng W."/>
            <person name="Fournier G."/>
            <person name="Mayhew G.F."/>
            <person name="Plunkett G. III"/>
            <person name="Rose D.J."/>
            <person name="Darling A."/>
            <person name="Mau B."/>
            <person name="Perna N.T."/>
            <person name="Payne S.M."/>
            <person name="Runyen-Janecky L.J."/>
            <person name="Zhou S."/>
            <person name="Schwartz D.C."/>
            <person name="Blattner F.R."/>
        </authorList>
    </citation>
    <scope>NUCLEOTIDE SEQUENCE [LARGE SCALE GENOMIC DNA]</scope>
    <source>
        <strain>ATCC 700930 / 2457T / Serotype 2a</strain>
    </source>
</reference>
<sequence>MNRLFSGRSDMPFALLLLAPSLLLLGGLVAWPMVSNIEISFLRLPLNPNIESTFVGVSNYVRILSDPGFWHSLWMTVWYTALVVAGSTVLGLAVAMFFNREFRLRKTARSLVILSYVTPSISLVFAWKYMFNNGYGIVNYLGVDLLHLYEQAPLWFDNPGSSFVLVVLFAIWRYFPYAFISFLAILQTIDKSLYEAAEMDGANAWQRFRIVTLPAIMPVLATVVTLRTIWMFYMFADVYLLTTKVDILGVYLYKTAFAFNDLGKAAAISVVLFIIIFAVILLTRKRVNLNGNK</sequence>